<keyword id="KW-0028">Amino-acid biosynthesis</keyword>
<keyword id="KW-0963">Cytoplasm</keyword>
<keyword id="KW-0368">Histidine biosynthesis</keyword>
<keyword id="KW-0456">Lyase</keyword>
<feature type="chain" id="PRO_0000158155" description="Imidazoleglycerol-phosphate dehydratase">
    <location>
        <begin position="1"/>
        <end position="201"/>
    </location>
</feature>
<comment type="catalytic activity">
    <reaction evidence="1">
        <text>D-erythro-1-(imidazol-4-yl)glycerol 3-phosphate = 3-(imidazol-4-yl)-2-oxopropyl phosphate + H2O</text>
        <dbReference type="Rhea" id="RHEA:11040"/>
        <dbReference type="ChEBI" id="CHEBI:15377"/>
        <dbReference type="ChEBI" id="CHEBI:57766"/>
        <dbReference type="ChEBI" id="CHEBI:58278"/>
        <dbReference type="EC" id="4.2.1.19"/>
    </reaction>
</comment>
<comment type="pathway">
    <text evidence="1">Amino-acid biosynthesis; L-histidine biosynthesis; L-histidine from 5-phospho-alpha-D-ribose 1-diphosphate: step 6/9.</text>
</comment>
<comment type="subcellular location">
    <subcellularLocation>
        <location evidence="1">Cytoplasm</location>
    </subcellularLocation>
</comment>
<comment type="similarity">
    <text evidence="1">Belongs to the imidazoleglycerol-phosphate dehydratase family.</text>
</comment>
<name>HIS7_PROMP</name>
<reference key="1">
    <citation type="journal article" date="2003" name="Nature">
        <title>Genome divergence in two Prochlorococcus ecotypes reflects oceanic niche differentiation.</title>
        <authorList>
            <person name="Rocap G."/>
            <person name="Larimer F.W."/>
            <person name="Lamerdin J.E."/>
            <person name="Malfatti S."/>
            <person name="Chain P."/>
            <person name="Ahlgren N.A."/>
            <person name="Arellano A."/>
            <person name="Coleman M."/>
            <person name="Hauser L."/>
            <person name="Hess W.R."/>
            <person name="Johnson Z.I."/>
            <person name="Land M.L."/>
            <person name="Lindell D."/>
            <person name="Post A.F."/>
            <person name="Regala W."/>
            <person name="Shah M."/>
            <person name="Shaw S.L."/>
            <person name="Steglich C."/>
            <person name="Sullivan M.B."/>
            <person name="Ting C.S."/>
            <person name="Tolonen A."/>
            <person name="Webb E.A."/>
            <person name="Zinser E.R."/>
            <person name="Chisholm S.W."/>
        </authorList>
    </citation>
    <scope>NUCLEOTIDE SEQUENCE [LARGE SCALE GENOMIC DNA]</scope>
    <source>
        <strain>CCMP1986 / NIES-2087 / MED4</strain>
    </source>
</reference>
<accession>Q7V314</accession>
<dbReference type="EC" id="4.2.1.19" evidence="1"/>
<dbReference type="EMBL" id="BX548174">
    <property type="protein sequence ID" value="CAE18740.1"/>
    <property type="molecule type" value="Genomic_DNA"/>
</dbReference>
<dbReference type="RefSeq" id="WP_011131918.1">
    <property type="nucleotide sequence ID" value="NC_005072.1"/>
</dbReference>
<dbReference type="SMR" id="Q7V314"/>
<dbReference type="STRING" id="59919.PMM0281"/>
<dbReference type="KEGG" id="pmm:PMM0281"/>
<dbReference type="eggNOG" id="COG0131">
    <property type="taxonomic scope" value="Bacteria"/>
</dbReference>
<dbReference type="HOGENOM" id="CLU_044308_3_0_3"/>
<dbReference type="OrthoDB" id="9790411at2"/>
<dbReference type="UniPathway" id="UPA00031">
    <property type="reaction ID" value="UER00011"/>
</dbReference>
<dbReference type="Proteomes" id="UP000001026">
    <property type="component" value="Chromosome"/>
</dbReference>
<dbReference type="GO" id="GO:0005737">
    <property type="term" value="C:cytoplasm"/>
    <property type="evidence" value="ECO:0007669"/>
    <property type="project" value="UniProtKB-SubCell"/>
</dbReference>
<dbReference type="GO" id="GO:0004424">
    <property type="term" value="F:imidazoleglycerol-phosphate dehydratase activity"/>
    <property type="evidence" value="ECO:0007669"/>
    <property type="project" value="UniProtKB-UniRule"/>
</dbReference>
<dbReference type="GO" id="GO:0000105">
    <property type="term" value="P:L-histidine biosynthetic process"/>
    <property type="evidence" value="ECO:0007669"/>
    <property type="project" value="UniProtKB-UniRule"/>
</dbReference>
<dbReference type="CDD" id="cd07914">
    <property type="entry name" value="IGPD"/>
    <property type="match status" value="1"/>
</dbReference>
<dbReference type="FunFam" id="3.30.230.40:FF:000002">
    <property type="entry name" value="Imidazoleglycerol-phosphate dehydratase"/>
    <property type="match status" value="1"/>
</dbReference>
<dbReference type="FunFam" id="3.30.230.40:FF:000003">
    <property type="entry name" value="Imidazoleglycerol-phosphate dehydratase HisB"/>
    <property type="match status" value="1"/>
</dbReference>
<dbReference type="Gene3D" id="3.30.230.40">
    <property type="entry name" value="Imidazole glycerol phosphate dehydratase, domain 1"/>
    <property type="match status" value="2"/>
</dbReference>
<dbReference type="HAMAP" id="MF_00076">
    <property type="entry name" value="HisB"/>
    <property type="match status" value="1"/>
</dbReference>
<dbReference type="InterPro" id="IPR038494">
    <property type="entry name" value="IGPD_sf"/>
</dbReference>
<dbReference type="InterPro" id="IPR000807">
    <property type="entry name" value="ImidazoleglycerolP_deHydtase"/>
</dbReference>
<dbReference type="InterPro" id="IPR020565">
    <property type="entry name" value="ImidazoleglycerP_deHydtase_CS"/>
</dbReference>
<dbReference type="InterPro" id="IPR020568">
    <property type="entry name" value="Ribosomal_Su5_D2-typ_SF"/>
</dbReference>
<dbReference type="NCBIfam" id="NF002108">
    <property type="entry name" value="PRK00951.1-3"/>
    <property type="match status" value="1"/>
</dbReference>
<dbReference type="NCBIfam" id="NF002109">
    <property type="entry name" value="PRK00951.1-5"/>
    <property type="match status" value="1"/>
</dbReference>
<dbReference type="NCBIfam" id="NF002111">
    <property type="entry name" value="PRK00951.2-1"/>
    <property type="match status" value="1"/>
</dbReference>
<dbReference type="NCBIfam" id="NF002114">
    <property type="entry name" value="PRK00951.2-4"/>
    <property type="match status" value="1"/>
</dbReference>
<dbReference type="PANTHER" id="PTHR23133:SF2">
    <property type="entry name" value="IMIDAZOLEGLYCEROL-PHOSPHATE DEHYDRATASE"/>
    <property type="match status" value="1"/>
</dbReference>
<dbReference type="PANTHER" id="PTHR23133">
    <property type="entry name" value="IMIDAZOLEGLYCEROL-PHOSPHATE DEHYDRATASE HIS7"/>
    <property type="match status" value="1"/>
</dbReference>
<dbReference type="Pfam" id="PF00475">
    <property type="entry name" value="IGPD"/>
    <property type="match status" value="1"/>
</dbReference>
<dbReference type="SUPFAM" id="SSF54211">
    <property type="entry name" value="Ribosomal protein S5 domain 2-like"/>
    <property type="match status" value="2"/>
</dbReference>
<dbReference type="PROSITE" id="PS00954">
    <property type="entry name" value="IGP_DEHYDRATASE_1"/>
    <property type="match status" value="1"/>
</dbReference>
<dbReference type="PROSITE" id="PS00955">
    <property type="entry name" value="IGP_DEHYDRATASE_2"/>
    <property type="match status" value="1"/>
</dbReference>
<protein>
    <recommendedName>
        <fullName evidence="1">Imidazoleglycerol-phosphate dehydratase</fullName>
        <shortName evidence="1">IGPD</shortName>
        <ecNumber evidence="1">4.2.1.19</ecNumber>
    </recommendedName>
</protein>
<gene>
    <name evidence="1" type="primary">hisB</name>
    <name type="ordered locus">PMM0281</name>
</gene>
<evidence type="ECO:0000255" key="1">
    <source>
        <dbReference type="HAMAP-Rule" id="MF_00076"/>
    </source>
</evidence>
<organism>
    <name type="scientific">Prochlorococcus marinus subsp. pastoris (strain CCMP1986 / NIES-2087 / MED4)</name>
    <dbReference type="NCBI Taxonomy" id="59919"/>
    <lineage>
        <taxon>Bacteria</taxon>
        <taxon>Bacillati</taxon>
        <taxon>Cyanobacteriota</taxon>
        <taxon>Cyanophyceae</taxon>
        <taxon>Synechococcales</taxon>
        <taxon>Prochlorococcaceae</taxon>
        <taxon>Prochlorococcus</taxon>
    </lineage>
</organism>
<sequence length="201" mass="22432">MSSLRQSEIKRKTNETDISVFINLDGNGISEIETGIPFLDHMLHQISSHGLFDLKIKAIGDTHIDDHHTNEDVGIALGKAFSKALGERKGISRFGHFFAPLDEALVQVTLDCSGRPHLSYDLQLKAPRIGNYDTELVKEFFIAFVNNSGITLHINQIRGSNSHHIVEACFKAFSRAMRMATEIDLRRSDSIPSSKGMLENQ</sequence>
<proteinExistence type="inferred from homology"/>